<feature type="chain" id="PRO_0000254028" description="Sperm flagellar protein 1">
    <location>
        <begin position="1"/>
        <end position="236"/>
    </location>
</feature>
<feature type="domain" description="Calponin-homology (CH)" evidence="4">
    <location>
        <begin position="7"/>
        <end position="112"/>
    </location>
</feature>
<feature type="region of interest" description="Disordered" evidence="5">
    <location>
        <begin position="118"/>
        <end position="177"/>
    </location>
</feature>
<feature type="region of interest" description="Essential for homodimerization and microtubule bundling activity" evidence="2">
    <location>
        <begin position="183"/>
        <end position="236"/>
    </location>
</feature>
<protein>
    <recommendedName>
        <fullName>Sperm flagellar protein 1</fullName>
    </recommendedName>
</protein>
<organism>
    <name type="scientific">Bos taurus</name>
    <name type="common">Bovine</name>
    <dbReference type="NCBI Taxonomy" id="9913"/>
    <lineage>
        <taxon>Eukaryota</taxon>
        <taxon>Metazoa</taxon>
        <taxon>Chordata</taxon>
        <taxon>Craniata</taxon>
        <taxon>Vertebrata</taxon>
        <taxon>Euteleostomi</taxon>
        <taxon>Mammalia</taxon>
        <taxon>Eutheria</taxon>
        <taxon>Laurasiatheria</taxon>
        <taxon>Artiodactyla</taxon>
        <taxon>Ruminantia</taxon>
        <taxon>Pecora</taxon>
        <taxon>Bovidae</taxon>
        <taxon>Bovinae</taxon>
        <taxon>Bos</taxon>
    </lineage>
</organism>
<name>SPEF1_BOVIN</name>
<sequence length="236" mass="27111">MAGSVDEEALHQLYLWVDNIPLSRPKRNLSRDFSDGVLVAEVIKFYFPKMVEMHNYVPANSLQQKLSNWSHLNRKVLNKLNFSVPEDVMRKIAQCAPGVVELVLIPLRQRLEERQRRRKQGIGSLQELAPQDGTDYMDVGLSQKARGEGVPDPQGRGQLREGRLPVPRPPGDSQALQSDPSFILQIAEKEQELLASQETVQVLQMKVRRLEHLLQLKNVRIEDLSRRLQQAERKQR</sequence>
<gene>
    <name type="primary">SPEF1</name>
</gene>
<proteinExistence type="evidence at transcript level"/>
<dbReference type="EMBL" id="BT021696">
    <property type="protein sequence ID" value="AAX46543.1"/>
    <property type="molecule type" value="mRNA"/>
</dbReference>
<dbReference type="EMBL" id="BC118201">
    <property type="protein sequence ID" value="AAI18202.1"/>
    <property type="molecule type" value="mRNA"/>
</dbReference>
<dbReference type="RefSeq" id="NP_001029594.1">
    <property type="nucleotide sequence ID" value="NM_001034422.2"/>
</dbReference>
<dbReference type="SMR" id="Q58DA1"/>
<dbReference type="FunCoup" id="Q58DA1">
    <property type="interactions" value="463"/>
</dbReference>
<dbReference type="STRING" id="9913.ENSBTAP00000008640"/>
<dbReference type="PaxDb" id="9913-ENSBTAP00000008640"/>
<dbReference type="GeneID" id="512410"/>
<dbReference type="KEGG" id="bta:512410"/>
<dbReference type="CTD" id="25876"/>
<dbReference type="VEuPathDB" id="HostDB:ENSBTAG00000006578"/>
<dbReference type="eggNOG" id="ENOG502QRJA">
    <property type="taxonomic scope" value="Eukaryota"/>
</dbReference>
<dbReference type="HOGENOM" id="CLU_069635_0_0_1"/>
<dbReference type="InParanoid" id="Q58DA1"/>
<dbReference type="OMA" id="KLDNWNT"/>
<dbReference type="OrthoDB" id="193300at2759"/>
<dbReference type="TreeFam" id="TF323506"/>
<dbReference type="Proteomes" id="UP000009136">
    <property type="component" value="Chromosome 13"/>
</dbReference>
<dbReference type="Bgee" id="ENSBTAG00000006578">
    <property type="expression patterns" value="Expressed in olfactory segment of nasal mucosa and 90 other cell types or tissues"/>
</dbReference>
<dbReference type="GO" id="GO:0097729">
    <property type="term" value="C:9+2 motile cilium"/>
    <property type="evidence" value="ECO:0000250"/>
    <property type="project" value="UniProtKB"/>
</dbReference>
<dbReference type="GO" id="GO:0016324">
    <property type="term" value="C:apical plasma membrane"/>
    <property type="evidence" value="ECO:0000250"/>
    <property type="project" value="UniProtKB"/>
</dbReference>
<dbReference type="GO" id="GO:1990716">
    <property type="term" value="C:axonemal central apparatus"/>
    <property type="evidence" value="ECO:0000250"/>
    <property type="project" value="UniProtKB"/>
</dbReference>
<dbReference type="GO" id="GO:0005930">
    <property type="term" value="C:axoneme"/>
    <property type="evidence" value="ECO:0000250"/>
    <property type="project" value="UniProtKB"/>
</dbReference>
<dbReference type="GO" id="GO:0016323">
    <property type="term" value="C:basolateral plasma membrane"/>
    <property type="evidence" value="ECO:0000250"/>
    <property type="project" value="UniProtKB"/>
</dbReference>
<dbReference type="GO" id="GO:0097542">
    <property type="term" value="C:ciliary tip"/>
    <property type="evidence" value="ECO:0000250"/>
    <property type="project" value="UniProtKB"/>
</dbReference>
<dbReference type="GO" id="GO:0005737">
    <property type="term" value="C:cytoplasm"/>
    <property type="evidence" value="ECO:0000250"/>
    <property type="project" value="UniProtKB"/>
</dbReference>
<dbReference type="GO" id="GO:0030175">
    <property type="term" value="C:filopodium"/>
    <property type="evidence" value="ECO:0000250"/>
    <property type="project" value="UniProtKB"/>
</dbReference>
<dbReference type="GO" id="GO:0030027">
    <property type="term" value="C:lamellipodium"/>
    <property type="evidence" value="ECO:0000250"/>
    <property type="project" value="UniProtKB"/>
</dbReference>
<dbReference type="GO" id="GO:0005874">
    <property type="term" value="C:microtubule"/>
    <property type="evidence" value="ECO:0000250"/>
    <property type="project" value="UniProtKB"/>
</dbReference>
<dbReference type="GO" id="GO:0005902">
    <property type="term" value="C:microvillus"/>
    <property type="evidence" value="ECO:0000250"/>
    <property type="project" value="UniProtKB"/>
</dbReference>
<dbReference type="GO" id="GO:0001725">
    <property type="term" value="C:stress fiber"/>
    <property type="evidence" value="ECO:0007669"/>
    <property type="project" value="UniProtKB-SubCell"/>
</dbReference>
<dbReference type="GO" id="GO:0003779">
    <property type="term" value="F:actin binding"/>
    <property type="evidence" value="ECO:0007669"/>
    <property type="project" value="UniProtKB-KW"/>
</dbReference>
<dbReference type="GO" id="GO:0008017">
    <property type="term" value="F:microtubule binding"/>
    <property type="evidence" value="ECO:0000250"/>
    <property type="project" value="UniProtKB"/>
</dbReference>
<dbReference type="GO" id="GO:1904158">
    <property type="term" value="P:axonemal central apparatus assembly"/>
    <property type="evidence" value="ECO:0000250"/>
    <property type="project" value="UniProtKB"/>
</dbReference>
<dbReference type="GO" id="GO:0016477">
    <property type="term" value="P:cell migration"/>
    <property type="evidence" value="ECO:0000250"/>
    <property type="project" value="UniProtKB"/>
</dbReference>
<dbReference type="GO" id="GO:0003341">
    <property type="term" value="P:cilium movement"/>
    <property type="evidence" value="ECO:0000250"/>
    <property type="project" value="UniProtKB"/>
</dbReference>
<dbReference type="GO" id="GO:0046847">
    <property type="term" value="P:filopodium assembly"/>
    <property type="evidence" value="ECO:0000250"/>
    <property type="project" value="UniProtKB"/>
</dbReference>
<dbReference type="GO" id="GO:0030032">
    <property type="term" value="P:lamellipodium assembly"/>
    <property type="evidence" value="ECO:0000250"/>
    <property type="project" value="UniProtKB"/>
</dbReference>
<dbReference type="GO" id="GO:0001578">
    <property type="term" value="P:microtubule bundle formation"/>
    <property type="evidence" value="ECO:0000250"/>
    <property type="project" value="UniProtKB"/>
</dbReference>
<dbReference type="GO" id="GO:0007026">
    <property type="term" value="P:negative regulation of microtubule depolymerization"/>
    <property type="evidence" value="ECO:0000250"/>
    <property type="project" value="UniProtKB"/>
</dbReference>
<dbReference type="GO" id="GO:0051493">
    <property type="term" value="P:regulation of cytoskeleton organization"/>
    <property type="evidence" value="ECO:0000318"/>
    <property type="project" value="GO_Central"/>
</dbReference>
<dbReference type="GO" id="GO:2000095">
    <property type="term" value="P:regulation of Wnt signaling pathway, planar cell polarity pathway"/>
    <property type="evidence" value="ECO:0000250"/>
    <property type="project" value="UniProtKB"/>
</dbReference>
<dbReference type="FunFam" id="1.10.418.10:FF:000060">
    <property type="entry name" value="Sperm flagellar protein 1"/>
    <property type="match status" value="1"/>
</dbReference>
<dbReference type="Gene3D" id="1.10.418.10">
    <property type="entry name" value="Calponin-like domain"/>
    <property type="match status" value="1"/>
</dbReference>
<dbReference type="InterPro" id="IPR010441">
    <property type="entry name" value="CH_2"/>
</dbReference>
<dbReference type="InterPro" id="IPR001715">
    <property type="entry name" value="CH_dom"/>
</dbReference>
<dbReference type="InterPro" id="IPR036872">
    <property type="entry name" value="CH_dom_sf"/>
</dbReference>
<dbReference type="InterPro" id="IPR052111">
    <property type="entry name" value="Spermatogenesis_Ciliary_MAP"/>
</dbReference>
<dbReference type="PANTHER" id="PTHR12509:SF16">
    <property type="entry name" value="SPERM FLAGELLAR PROTEIN 1"/>
    <property type="match status" value="1"/>
</dbReference>
<dbReference type="PANTHER" id="PTHR12509">
    <property type="entry name" value="SPERMATOGENESIS-ASSOCIATED 4-RELATED"/>
    <property type="match status" value="1"/>
</dbReference>
<dbReference type="Pfam" id="PF06294">
    <property type="entry name" value="CH_2"/>
    <property type="match status" value="1"/>
</dbReference>
<dbReference type="SUPFAM" id="SSF47576">
    <property type="entry name" value="Calponin-homology domain, CH-domain"/>
    <property type="match status" value="1"/>
</dbReference>
<dbReference type="PROSITE" id="PS50021">
    <property type="entry name" value="CH"/>
    <property type="match status" value="1"/>
</dbReference>
<reference key="1">
    <citation type="journal article" date="2005" name="BMC Genomics">
        <title>Characterization of 954 bovine full-CDS cDNA sequences.</title>
        <authorList>
            <person name="Harhay G.P."/>
            <person name="Sonstegard T.S."/>
            <person name="Keele J.W."/>
            <person name="Heaton M.P."/>
            <person name="Clawson M.L."/>
            <person name="Snelling W.M."/>
            <person name="Wiedmann R.T."/>
            <person name="Van Tassell C.P."/>
            <person name="Smith T.P.L."/>
        </authorList>
    </citation>
    <scope>NUCLEOTIDE SEQUENCE [LARGE SCALE MRNA]</scope>
</reference>
<reference key="2">
    <citation type="submission" date="2006-06" db="EMBL/GenBank/DDBJ databases">
        <authorList>
            <consortium name="NIH - Mammalian Gene Collection (MGC) project"/>
        </authorList>
    </citation>
    <scope>NUCLEOTIDE SEQUENCE [LARGE SCALE MRNA]</scope>
    <source>
        <strain>Hereford</strain>
        <tissue>Thalamus</tissue>
    </source>
</reference>
<evidence type="ECO:0000250" key="1">
    <source>
        <dbReference type="UniProtKB" id="Q0IH24"/>
    </source>
</evidence>
<evidence type="ECO:0000250" key="2">
    <source>
        <dbReference type="UniProtKB" id="Q99JL1"/>
    </source>
</evidence>
<evidence type="ECO:0000250" key="3">
    <source>
        <dbReference type="UniProtKB" id="Q9Y4P9"/>
    </source>
</evidence>
<evidence type="ECO:0000255" key="4">
    <source>
        <dbReference type="PROSITE-ProRule" id="PRU00044"/>
    </source>
</evidence>
<evidence type="ECO:0000256" key="5">
    <source>
        <dbReference type="SAM" id="MobiDB-lite"/>
    </source>
</evidence>
<comment type="function">
    <text evidence="1 2">Microtubule-associated protein involved in the stabilization of microtubules along the axis of migration during radial intercalation. Promotes the establishment and stabilization of an axis of microtubules required for the active migration of cells into the outer epithelium (By similarity). Microtubule-associated protein that promotes microtubule bundling and stabilizes microtubules against depolymerization in response to cold shock (By similarity). Essential for ciliary central apparatus formation which requires both its microtubule-binding and bundling activities and for ciliary localization of HYDIN and SPAG6 in ependymal cilia (By similarity). Binds actin in intestinal epithelial cells (IECs), essential for IECs survival and contributes to formation of filopodia and lamellipodia in migrating IECs (By similarity). Regulates planar cell polarity signaling pathway and asymmetric microtubule accumulation in ciliated epithelia (By similarity).</text>
</comment>
<comment type="subunit">
    <text evidence="2 3">Homodimer (By similarity). Interacts with actin, TJP1, CGN and CDH1 (By similarity).</text>
</comment>
<comment type="subcellular location">
    <subcellularLocation>
        <location evidence="2">Cytoplasm</location>
    </subcellularLocation>
    <subcellularLocation>
        <location evidence="2">Cell projection</location>
        <location evidence="2">Cilium</location>
        <location evidence="2">Flagellum</location>
    </subcellularLocation>
    <subcellularLocation>
        <location evidence="1">Cytoplasm</location>
        <location evidence="1">Cytoskeleton</location>
        <location evidence="1">Cilium axoneme</location>
    </subcellularLocation>
    <subcellularLocation>
        <location evidence="1">Apical cell membrane</location>
    </subcellularLocation>
    <subcellularLocation>
        <location evidence="3">Basolateral cell membrane</location>
    </subcellularLocation>
    <subcellularLocation>
        <location evidence="3">Cytoplasm</location>
        <location evidence="3">Cytoskeleton</location>
        <location evidence="3">Stress fiber</location>
    </subcellularLocation>
    <subcellularLocation>
        <location evidence="3">Cell projection</location>
        <location evidence="3">Microvillus</location>
    </subcellularLocation>
    <subcellularLocation>
        <location evidence="3">Cell projection</location>
        <location evidence="3">Lamellipodium</location>
    </subcellularLocation>
    <subcellularLocation>
        <location evidence="3">Cell projection</location>
        <location evidence="3">Filopodium</location>
    </subcellularLocation>
    <text evidence="1 3">Present in the tails of developing and epididymal sperm, internal to the fibrous sheath and around the outer dense fibers of the sperm flagellum. Also found at the apical tip of cilia. Colocalizes with TJP1 and CGN at sites of cell-cell contact in intestinal epithelial cells (By similarity).</text>
</comment>
<comment type="domain">
    <text evidence="2">The Calponin-homology domain mediates its binding to microtubules.</text>
</comment>
<comment type="miscellaneous">
    <text evidence="1">Radial intercalation is a developmentally reiterated form of migration by which cells move in a direction orthogonal to the plane of the tissue from an inner layer to an outer layer.</text>
</comment>
<keyword id="KW-0009">Actin-binding</keyword>
<keyword id="KW-1003">Cell membrane</keyword>
<keyword id="KW-0966">Cell projection</keyword>
<keyword id="KW-0969">Cilium</keyword>
<keyword id="KW-0970">Cilium biogenesis/degradation</keyword>
<keyword id="KW-0963">Cytoplasm</keyword>
<keyword id="KW-0206">Cytoskeleton</keyword>
<keyword id="KW-0282">Flagellum</keyword>
<keyword id="KW-0472">Membrane</keyword>
<keyword id="KW-0493">Microtubule</keyword>
<keyword id="KW-1185">Reference proteome</keyword>
<accession>Q58DA1</accession>